<evidence type="ECO:0000250" key="1">
    <source>
        <dbReference type="UniProtKB" id="P30304"/>
    </source>
</evidence>
<evidence type="ECO:0000250" key="2">
    <source>
        <dbReference type="UniProtKB" id="P30305"/>
    </source>
</evidence>
<evidence type="ECO:0000250" key="3">
    <source>
        <dbReference type="UniProtKB" id="P48966"/>
    </source>
</evidence>
<evidence type="ECO:0000255" key="4">
    <source>
        <dbReference type="PROSITE-ProRule" id="PRU00173"/>
    </source>
</evidence>
<evidence type="ECO:0000256" key="5">
    <source>
        <dbReference type="SAM" id="MobiDB-lite"/>
    </source>
</evidence>
<evidence type="ECO:0000269" key="6">
    <source>
    </source>
</evidence>
<evidence type="ECO:0000305" key="7"/>
<accession>P30306</accession>
<accession>Q99LP3</accession>
<reference key="1">
    <citation type="journal article" date="1992" name="Genes Dev.">
        <title>A mouse cdc25 homolog is differentially and developmentally expressed.</title>
        <authorList>
            <person name="Kakizuka A."/>
            <person name="Sebastian B."/>
            <person name="Borgmeyer U."/>
            <person name="Hermans-Borgmeyer I."/>
            <person name="Bolado J."/>
            <person name="Hunter T."/>
            <person name="Hoekstra M.F."/>
            <person name="Evans R.M."/>
        </authorList>
    </citation>
    <scope>NUCLEOTIDE SEQUENCE [MRNA]</scope>
    <scope>TISSUE SPECIFICITY</scope>
    <scope>DEVELOPMENTAL STAGE</scope>
</reference>
<reference key="2">
    <citation type="journal article" date="2004" name="Genome Res.">
        <title>The status, quality, and expansion of the NIH full-length cDNA project: the Mammalian Gene Collection (MGC).</title>
        <authorList>
            <consortium name="The MGC Project Team"/>
        </authorList>
    </citation>
    <scope>NUCLEOTIDE SEQUENCE [LARGE SCALE MRNA] OF 328-576</scope>
</reference>
<reference key="3">
    <citation type="journal article" date="2010" name="Cell">
        <title>A tissue-specific atlas of mouse protein phosphorylation and expression.</title>
        <authorList>
            <person name="Huttlin E.L."/>
            <person name="Jedrychowski M.P."/>
            <person name="Elias J.E."/>
            <person name="Goswami T."/>
            <person name="Rad R."/>
            <person name="Beausoleil S.A."/>
            <person name="Villen J."/>
            <person name="Haas W."/>
            <person name="Sowa M.E."/>
            <person name="Gygi S.P."/>
        </authorList>
    </citation>
    <scope>IDENTIFICATION BY MASS SPECTROMETRY [LARGE SCALE ANALYSIS]</scope>
    <source>
        <tissue>Lung</tissue>
        <tissue>Spleen</tissue>
    </source>
</reference>
<sequence>MEVPLQKSAPGSALSPARVLGGIQRPRHLSVFEFESDGFLGSPEPTASSSPVTTLTQTMHNLAGLGSEPPKAQVGSLSFQNRLADLSLSRRTSECSLSSESSESSDAGLCMDSPSPVDPQMAERTFEQAIQAASRVIQNEQFTIKRFRSLPVRLLEHSPVLQSITNSRALDSWRKTEAGYRAAANSPGEDKENDGYIFKMPQELPHSSSAQALAEWVSRRQAFTQRPSSAPDLMCLTTEWKMEVEELSPVAQSSSLTPVERASEEDDGFVDILESDLKDDEKVPAGMENLISAPLVKKLDKEEEQDLIMFSKCQRLFRSPSMPCSVIRPILKRLERPQDRDVPVQSKRRKSVTPLEEQQLEEPKARVFRSKSLCHEIENILDSDHRGLIGDYSKAFLLQTVDGKHQDLKYISPETMVALLTGKFSNIVEKFVIVDCRYPYEYEGGHIKNAVNLPLERDAETFLLQRPIMPCSLDKRIILIFHCEFSSERGPRMCRFIRERDRAANDYPSLYYPEMYILKGGYKEFFPQHPNFCEPQDYRPMNHEAFRDELRNFRLKTRSWAGERSRRELCSRLQDQ</sequence>
<gene>
    <name type="primary">Cdc25b</name>
    <name type="synonym">Cdc25m2</name>
</gene>
<protein>
    <recommendedName>
        <fullName>M-phase inducer phosphatase 2</fullName>
        <ecNumber evidence="2">3.1.3.48</ecNumber>
    </recommendedName>
    <alternativeName>
        <fullName>Dual specificity phosphatase Cdc25B</fullName>
    </alternativeName>
</protein>
<dbReference type="EC" id="3.1.3.48" evidence="2"/>
<dbReference type="EMBL" id="S93521">
    <property type="protein sequence ID" value="AAB22026.1"/>
    <property type="molecule type" value="mRNA"/>
</dbReference>
<dbReference type="EMBL" id="BC002287">
    <property type="protein sequence ID" value="AAH02287.1"/>
    <property type="molecule type" value="mRNA"/>
</dbReference>
<dbReference type="CCDS" id="CCDS16758.1"/>
<dbReference type="PIR" id="A42236">
    <property type="entry name" value="A42236"/>
</dbReference>
<dbReference type="RefSeq" id="NP_075606.1">
    <property type="nucleotide sequence ID" value="NM_023117.4"/>
</dbReference>
<dbReference type="SMR" id="P30306"/>
<dbReference type="BioGRID" id="198622">
    <property type="interactions" value="5"/>
</dbReference>
<dbReference type="FunCoup" id="P30306">
    <property type="interactions" value="1424"/>
</dbReference>
<dbReference type="IntAct" id="P30306">
    <property type="interactions" value="3"/>
</dbReference>
<dbReference type="MINT" id="P30306"/>
<dbReference type="STRING" id="10090.ENSMUSP00000028804"/>
<dbReference type="BindingDB" id="P30306"/>
<dbReference type="ChEMBL" id="CHEMBL2723"/>
<dbReference type="iPTMnet" id="P30306"/>
<dbReference type="PhosphoSitePlus" id="P30306"/>
<dbReference type="jPOST" id="P30306"/>
<dbReference type="PaxDb" id="10090-ENSMUSP00000028804"/>
<dbReference type="ProteomicsDB" id="252608"/>
<dbReference type="Antibodypedia" id="3625">
    <property type="antibodies" value="952 antibodies from 40 providers"/>
</dbReference>
<dbReference type="DNASU" id="12531"/>
<dbReference type="Ensembl" id="ENSMUST00000028804.15">
    <property type="protein sequence ID" value="ENSMUSP00000028804.9"/>
    <property type="gene ID" value="ENSMUSG00000027330.17"/>
</dbReference>
<dbReference type="GeneID" id="12531"/>
<dbReference type="KEGG" id="mmu:12531"/>
<dbReference type="UCSC" id="uc008mky.3">
    <property type="organism name" value="mouse"/>
</dbReference>
<dbReference type="AGR" id="MGI:99701"/>
<dbReference type="CTD" id="994"/>
<dbReference type="MGI" id="MGI:99701">
    <property type="gene designation" value="Cdc25b"/>
</dbReference>
<dbReference type="VEuPathDB" id="HostDB:ENSMUSG00000027330"/>
<dbReference type="eggNOG" id="KOG3772">
    <property type="taxonomic scope" value="Eukaryota"/>
</dbReference>
<dbReference type="GeneTree" id="ENSGT00940000158524"/>
<dbReference type="InParanoid" id="P30306"/>
<dbReference type="OMA" id="MHSKCRR"/>
<dbReference type="OrthoDB" id="26523at2759"/>
<dbReference type="PhylomeDB" id="P30306"/>
<dbReference type="TreeFam" id="TF101056"/>
<dbReference type="Reactome" id="R-MMU-69273">
    <property type="pathway name" value="Cyclin A/B1/B2 associated events during G2/M transition"/>
</dbReference>
<dbReference type="Reactome" id="R-MMU-69656">
    <property type="pathway name" value="Cyclin A:Cdk2-associated events at S phase entry"/>
</dbReference>
<dbReference type="BioGRID-ORCS" id="12531">
    <property type="hits" value="2 hits in 80 CRISPR screens"/>
</dbReference>
<dbReference type="ChiTaRS" id="Cdc25b">
    <property type="organism name" value="mouse"/>
</dbReference>
<dbReference type="PRO" id="PR:P30306"/>
<dbReference type="Proteomes" id="UP000000589">
    <property type="component" value="Chromosome 2"/>
</dbReference>
<dbReference type="RNAct" id="P30306">
    <property type="molecule type" value="protein"/>
</dbReference>
<dbReference type="Bgee" id="ENSMUSG00000027330">
    <property type="expression patterns" value="Expressed in fetal liver hematopoietic progenitor cell and 188 other cell types or tissues"/>
</dbReference>
<dbReference type="ExpressionAtlas" id="P30306">
    <property type="expression patterns" value="baseline and differential"/>
</dbReference>
<dbReference type="GO" id="GO:0005813">
    <property type="term" value="C:centrosome"/>
    <property type="evidence" value="ECO:0000250"/>
    <property type="project" value="UniProtKB"/>
</dbReference>
<dbReference type="GO" id="GO:0005737">
    <property type="term" value="C:cytoplasm"/>
    <property type="evidence" value="ECO:0000314"/>
    <property type="project" value="UniProtKB"/>
</dbReference>
<dbReference type="GO" id="GO:0005634">
    <property type="term" value="C:nucleus"/>
    <property type="evidence" value="ECO:0000314"/>
    <property type="project" value="UniProtKB"/>
</dbReference>
<dbReference type="GO" id="GO:0000922">
    <property type="term" value="C:spindle pole"/>
    <property type="evidence" value="ECO:0000250"/>
    <property type="project" value="UniProtKB"/>
</dbReference>
<dbReference type="GO" id="GO:0004721">
    <property type="term" value="F:phosphoprotein phosphatase activity"/>
    <property type="evidence" value="ECO:0000250"/>
    <property type="project" value="UniProtKB"/>
</dbReference>
<dbReference type="GO" id="GO:0019901">
    <property type="term" value="F:protein kinase binding"/>
    <property type="evidence" value="ECO:0007669"/>
    <property type="project" value="Ensembl"/>
</dbReference>
<dbReference type="GO" id="GO:0004725">
    <property type="term" value="F:protein tyrosine phosphatase activity"/>
    <property type="evidence" value="ECO:0007669"/>
    <property type="project" value="UniProtKB-EC"/>
</dbReference>
<dbReference type="GO" id="GO:0051301">
    <property type="term" value="P:cell division"/>
    <property type="evidence" value="ECO:0007669"/>
    <property type="project" value="UniProtKB-KW"/>
</dbReference>
<dbReference type="GO" id="GO:0007144">
    <property type="term" value="P:female meiosis I"/>
    <property type="evidence" value="ECO:0000315"/>
    <property type="project" value="MGI"/>
</dbReference>
<dbReference type="GO" id="GO:0001556">
    <property type="term" value="P:oocyte maturation"/>
    <property type="evidence" value="ECO:0000315"/>
    <property type="project" value="MGI"/>
</dbReference>
<dbReference type="GO" id="GO:0032467">
    <property type="term" value="P:positive regulation of cytokinesis"/>
    <property type="evidence" value="ECO:0007669"/>
    <property type="project" value="Ensembl"/>
</dbReference>
<dbReference type="GO" id="GO:0010971">
    <property type="term" value="P:positive regulation of G2/M transition of mitotic cell cycle"/>
    <property type="evidence" value="ECO:0000250"/>
    <property type="project" value="UniProtKB"/>
</dbReference>
<dbReference type="CDD" id="cd01530">
    <property type="entry name" value="Cdc25"/>
    <property type="match status" value="1"/>
</dbReference>
<dbReference type="FunFam" id="3.40.250.10:FF:000006">
    <property type="entry name" value="M-phase inducer phosphatase 2"/>
    <property type="match status" value="1"/>
</dbReference>
<dbReference type="Gene3D" id="3.40.250.10">
    <property type="entry name" value="Rhodanese-like domain"/>
    <property type="match status" value="1"/>
</dbReference>
<dbReference type="InterPro" id="IPR000751">
    <property type="entry name" value="MPI_Phosphatase"/>
</dbReference>
<dbReference type="InterPro" id="IPR001763">
    <property type="entry name" value="Rhodanese-like_dom"/>
</dbReference>
<dbReference type="InterPro" id="IPR036873">
    <property type="entry name" value="Rhodanese-like_dom_sf"/>
</dbReference>
<dbReference type="PANTHER" id="PTHR10828:SF48">
    <property type="entry name" value="M-PHASE INDUCER PHOSPHATASE 2"/>
    <property type="match status" value="1"/>
</dbReference>
<dbReference type="PANTHER" id="PTHR10828">
    <property type="entry name" value="M-PHASE INDUCER PHOSPHATASE DUAL SPECIFICITY PHOSPHATASE CDC25"/>
    <property type="match status" value="1"/>
</dbReference>
<dbReference type="Pfam" id="PF06617">
    <property type="entry name" value="M-inducer_phosp"/>
    <property type="match status" value="1"/>
</dbReference>
<dbReference type="Pfam" id="PF00581">
    <property type="entry name" value="Rhodanese"/>
    <property type="match status" value="1"/>
</dbReference>
<dbReference type="PRINTS" id="PR00716">
    <property type="entry name" value="MPIPHPHTASE"/>
</dbReference>
<dbReference type="SMART" id="SM00450">
    <property type="entry name" value="RHOD"/>
    <property type="match status" value="1"/>
</dbReference>
<dbReference type="SUPFAM" id="SSF52821">
    <property type="entry name" value="Rhodanese/Cell cycle control phosphatase"/>
    <property type="match status" value="1"/>
</dbReference>
<dbReference type="PROSITE" id="PS50206">
    <property type="entry name" value="RHODANESE_3"/>
    <property type="match status" value="1"/>
</dbReference>
<proteinExistence type="evidence at protein level"/>
<feature type="chain" id="PRO_0000198645" description="M-phase inducer phosphatase 2">
    <location>
        <begin position="1"/>
        <end position="576"/>
    </location>
</feature>
<feature type="domain" description="Rhodanese" evidence="4">
    <location>
        <begin position="427"/>
        <end position="534"/>
    </location>
</feature>
<feature type="region of interest" description="Disordered" evidence="5">
    <location>
        <begin position="90"/>
        <end position="119"/>
    </location>
</feature>
<feature type="region of interest" description="Disordered" evidence="5">
    <location>
        <begin position="338"/>
        <end position="358"/>
    </location>
</feature>
<feature type="compositionally biased region" description="Low complexity" evidence="5">
    <location>
        <begin position="90"/>
        <end position="105"/>
    </location>
</feature>
<feature type="active site" evidence="1">
    <location>
        <position position="483"/>
    </location>
</feature>
<feature type="modified residue" description="Phosphoserine" evidence="3">
    <location>
        <position position="42"/>
    </location>
</feature>
<feature type="modified residue" description="Phosphoserine; by MELK" evidence="2">
    <location>
        <position position="167"/>
    </location>
</feature>
<feature type="modified residue" description="Phosphoserine" evidence="2">
    <location>
        <position position="248"/>
    </location>
</feature>
<feature type="modified residue" description="Phosphoserine; by MELK and MAPK14" evidence="2">
    <location>
        <position position="321"/>
    </location>
</feature>
<feature type="modified residue" description="Phosphoserine; by AURKA" evidence="2">
    <location>
        <position position="351"/>
    </location>
</feature>
<feature type="modified residue" description="Phosphoserine; by BRSK1 and MAPK14" evidence="2">
    <location>
        <position position="372"/>
    </location>
</feature>
<feature type="modified residue" description="Phosphoserine" evidence="2">
    <location>
        <position position="559"/>
    </location>
</feature>
<feature type="sequence conflict" description="In Ref. 2; AAH02287." evidence="7" ref="2">
    <original>F</original>
    <variation>L</variation>
    <location>
        <position position="532"/>
    </location>
</feature>
<comment type="function">
    <text evidence="2">Tyrosine protein phosphatase which functions as a dosage-dependent inducer of mitotic progression. Directly dephosphorylates CDK1 and stimulates its kinase activity. Required for G2/M phases of the cell cycle progression and abscission during cytokinesis in a ECT2-dependent manner. The three isoforms seem to have a different level of activity.</text>
</comment>
<comment type="catalytic activity">
    <reaction evidence="2">
        <text>O-phospho-L-tyrosyl-[protein] + H2O = L-tyrosyl-[protein] + phosphate</text>
        <dbReference type="Rhea" id="RHEA:10684"/>
        <dbReference type="Rhea" id="RHEA-COMP:10136"/>
        <dbReference type="Rhea" id="RHEA-COMP:20101"/>
        <dbReference type="ChEBI" id="CHEBI:15377"/>
        <dbReference type="ChEBI" id="CHEBI:43474"/>
        <dbReference type="ChEBI" id="CHEBI:46858"/>
        <dbReference type="ChEBI" id="CHEBI:61978"/>
        <dbReference type="EC" id="3.1.3.48"/>
    </reaction>
    <physiologicalReaction direction="left-to-right" evidence="2">
        <dbReference type="Rhea" id="RHEA:10685"/>
    </physiologicalReaction>
</comment>
<comment type="activity regulation">
    <text evidence="2">Stimulated by B-type cyclins.</text>
</comment>
<comment type="subunit">
    <text evidence="2">Interacts with MAPK14 and 14-3-3 proteins.</text>
</comment>
<comment type="subcellular location">
    <subcellularLocation>
        <location evidence="2">Cytoplasm</location>
        <location evidence="2">Cytoskeleton</location>
        <location evidence="2">Microtubule organizing center</location>
        <location evidence="2">Centrosome</location>
    </subcellularLocation>
    <subcellularLocation>
        <location evidence="2">Cytoplasm</location>
        <location evidence="2">Cytoskeleton</location>
        <location evidence="2">Spindle pole</location>
    </subcellularLocation>
</comment>
<comment type="tissue specificity">
    <text evidence="6">Expressed predominantly in spleen, lung, heart, brain, intestine, and muscle.</text>
</comment>
<comment type="developmental stage">
    <text evidence="6">Detected at the one-cell stage followed by a decrease in signal intensity at the two-cell stage. Detectable at higher level in the four-cell stage and expressed through the eight-cell, 16-cell and morula stages. Maximal expression at the blastocyst stage.</text>
</comment>
<comment type="PTM">
    <text evidence="2">Phosphorylated by BRSK1 in vitro. Phosphorylated by CHEK1, which inhibits the activity of this protein. Phosphorylation at Ser-351 by AURKA might locally participate in the control of the onset of mitosis. Phosphorylation by MELK at Ser-167 promotes localization to the centrosome and the spindle poles during mitosis. Phosphorylation at Ser-321 and Ser-372 by MAPK14 is required for binding to 14-3-3 proteins (By similarity).</text>
</comment>
<comment type="similarity">
    <text evidence="7">Belongs to the MPI phosphatase family.</text>
</comment>
<name>MPIP2_MOUSE</name>
<keyword id="KW-0131">Cell cycle</keyword>
<keyword id="KW-0132">Cell division</keyword>
<keyword id="KW-0963">Cytoplasm</keyword>
<keyword id="KW-0206">Cytoskeleton</keyword>
<keyword id="KW-0378">Hydrolase</keyword>
<keyword id="KW-0498">Mitosis</keyword>
<keyword id="KW-0597">Phosphoprotein</keyword>
<keyword id="KW-0904">Protein phosphatase</keyword>
<keyword id="KW-1185">Reference proteome</keyword>
<organism>
    <name type="scientific">Mus musculus</name>
    <name type="common">Mouse</name>
    <dbReference type="NCBI Taxonomy" id="10090"/>
    <lineage>
        <taxon>Eukaryota</taxon>
        <taxon>Metazoa</taxon>
        <taxon>Chordata</taxon>
        <taxon>Craniata</taxon>
        <taxon>Vertebrata</taxon>
        <taxon>Euteleostomi</taxon>
        <taxon>Mammalia</taxon>
        <taxon>Eutheria</taxon>
        <taxon>Euarchontoglires</taxon>
        <taxon>Glires</taxon>
        <taxon>Rodentia</taxon>
        <taxon>Myomorpha</taxon>
        <taxon>Muroidea</taxon>
        <taxon>Muridae</taxon>
        <taxon>Murinae</taxon>
        <taxon>Mus</taxon>
        <taxon>Mus</taxon>
    </lineage>
</organism>